<evidence type="ECO:0000250" key="1"/>
<evidence type="ECO:0000255" key="2">
    <source>
        <dbReference type="HAMAP-Rule" id="MF_00768"/>
    </source>
</evidence>
<proteinExistence type="inferred from homology"/>
<sequence>MPKIEMEPLRRRELIDAAIRTIGQRGSLDVTVAQIAHEAGVSPALAHHYFGGKDKLILATMRHLLRELGRDLNAAIKQANTPHERIAAIIAVNFSAAQFAQETIAAWLTFYVHAQQSDDIKRLLRIYARRLHSNLVFALEQLTSRARANRIAEGAGAMIDGLYIRHALGADAPDAASAIALVEDYIAIQLSGQPSAEN</sequence>
<dbReference type="EMBL" id="CP000872">
    <property type="protein sequence ID" value="ABX61643.1"/>
    <property type="molecule type" value="Genomic_DNA"/>
</dbReference>
<dbReference type="RefSeq" id="WP_004690655.1">
    <property type="nucleotide sequence ID" value="NC_010103.1"/>
</dbReference>
<dbReference type="SMR" id="A9M9H9"/>
<dbReference type="GeneID" id="55590290"/>
<dbReference type="KEGG" id="bcs:BCAN_A0566"/>
<dbReference type="HOGENOM" id="CLU_069356_15_4_5"/>
<dbReference type="PhylomeDB" id="A9M9H9"/>
<dbReference type="UniPathway" id="UPA00529"/>
<dbReference type="Proteomes" id="UP000001385">
    <property type="component" value="Chromosome I"/>
</dbReference>
<dbReference type="GO" id="GO:0003700">
    <property type="term" value="F:DNA-binding transcription factor activity"/>
    <property type="evidence" value="ECO:0007669"/>
    <property type="project" value="UniProtKB-UniRule"/>
</dbReference>
<dbReference type="GO" id="GO:0000976">
    <property type="term" value="F:transcription cis-regulatory region binding"/>
    <property type="evidence" value="ECO:0007669"/>
    <property type="project" value="TreeGrafter"/>
</dbReference>
<dbReference type="GO" id="GO:0019285">
    <property type="term" value="P:glycine betaine biosynthetic process from choline"/>
    <property type="evidence" value="ECO:0007669"/>
    <property type="project" value="UniProtKB-UniRule"/>
</dbReference>
<dbReference type="GO" id="GO:0045892">
    <property type="term" value="P:negative regulation of DNA-templated transcription"/>
    <property type="evidence" value="ECO:0007669"/>
    <property type="project" value="UniProtKB-UniRule"/>
</dbReference>
<dbReference type="Gene3D" id="1.10.357.10">
    <property type="entry name" value="Tetracycline Repressor, domain 2"/>
    <property type="match status" value="1"/>
</dbReference>
<dbReference type="HAMAP" id="MF_00768">
    <property type="entry name" value="HTH_type_BetI"/>
    <property type="match status" value="1"/>
</dbReference>
<dbReference type="InterPro" id="IPR039538">
    <property type="entry name" value="BetI_C"/>
</dbReference>
<dbReference type="InterPro" id="IPR023772">
    <property type="entry name" value="DNA-bd_HTH_TetR-type_CS"/>
</dbReference>
<dbReference type="InterPro" id="IPR009057">
    <property type="entry name" value="Homeodomain-like_sf"/>
</dbReference>
<dbReference type="InterPro" id="IPR050109">
    <property type="entry name" value="HTH-type_TetR-like_transc_reg"/>
</dbReference>
<dbReference type="InterPro" id="IPR001647">
    <property type="entry name" value="HTH_TetR"/>
</dbReference>
<dbReference type="InterPro" id="IPR036271">
    <property type="entry name" value="Tet_transcr_reg_TetR-rel_C_sf"/>
</dbReference>
<dbReference type="InterPro" id="IPR017757">
    <property type="entry name" value="Tscrpt_rep_BetI"/>
</dbReference>
<dbReference type="NCBIfam" id="TIGR03384">
    <property type="entry name" value="betaine_BetI"/>
    <property type="match status" value="1"/>
</dbReference>
<dbReference type="NCBIfam" id="NF001978">
    <property type="entry name" value="PRK00767.1"/>
    <property type="match status" value="1"/>
</dbReference>
<dbReference type="PANTHER" id="PTHR30055:SF234">
    <property type="entry name" value="HTH-TYPE TRANSCRIPTIONAL REGULATOR BETI"/>
    <property type="match status" value="1"/>
</dbReference>
<dbReference type="PANTHER" id="PTHR30055">
    <property type="entry name" value="HTH-TYPE TRANSCRIPTIONAL REGULATOR RUTR"/>
    <property type="match status" value="1"/>
</dbReference>
<dbReference type="Pfam" id="PF13977">
    <property type="entry name" value="TetR_C_6"/>
    <property type="match status" value="1"/>
</dbReference>
<dbReference type="Pfam" id="PF00440">
    <property type="entry name" value="TetR_N"/>
    <property type="match status" value="1"/>
</dbReference>
<dbReference type="PRINTS" id="PR00455">
    <property type="entry name" value="HTHTETR"/>
</dbReference>
<dbReference type="SUPFAM" id="SSF46689">
    <property type="entry name" value="Homeodomain-like"/>
    <property type="match status" value="1"/>
</dbReference>
<dbReference type="SUPFAM" id="SSF48498">
    <property type="entry name" value="Tetracyclin repressor-like, C-terminal domain"/>
    <property type="match status" value="1"/>
</dbReference>
<dbReference type="PROSITE" id="PS01081">
    <property type="entry name" value="HTH_TETR_1"/>
    <property type="match status" value="1"/>
</dbReference>
<dbReference type="PROSITE" id="PS50977">
    <property type="entry name" value="HTH_TETR_2"/>
    <property type="match status" value="1"/>
</dbReference>
<protein>
    <recommendedName>
        <fullName evidence="2">HTH-type transcriptional regulator BetI</fullName>
    </recommendedName>
</protein>
<gene>
    <name evidence="2" type="primary">betI</name>
    <name type="ordered locus">BCAN_A0566</name>
</gene>
<feature type="chain" id="PRO_1000083551" description="HTH-type transcriptional regulator BetI">
    <location>
        <begin position="1"/>
        <end position="198"/>
    </location>
</feature>
<feature type="domain" description="HTH tetR-type" evidence="2">
    <location>
        <begin position="8"/>
        <end position="68"/>
    </location>
</feature>
<feature type="DNA-binding region" description="H-T-H motif" evidence="2">
    <location>
        <begin position="31"/>
        <end position="50"/>
    </location>
</feature>
<organism>
    <name type="scientific">Brucella canis (strain ATCC 23365 / NCTC 10854 / RM-666)</name>
    <dbReference type="NCBI Taxonomy" id="483179"/>
    <lineage>
        <taxon>Bacteria</taxon>
        <taxon>Pseudomonadati</taxon>
        <taxon>Pseudomonadota</taxon>
        <taxon>Alphaproteobacteria</taxon>
        <taxon>Hyphomicrobiales</taxon>
        <taxon>Brucellaceae</taxon>
        <taxon>Brucella/Ochrobactrum group</taxon>
        <taxon>Brucella</taxon>
    </lineage>
</organism>
<name>BETI_BRUC2</name>
<keyword id="KW-0238">DNA-binding</keyword>
<keyword id="KW-1185">Reference proteome</keyword>
<keyword id="KW-0678">Repressor</keyword>
<keyword id="KW-0804">Transcription</keyword>
<keyword id="KW-0805">Transcription regulation</keyword>
<reference key="1">
    <citation type="submission" date="2007-10" db="EMBL/GenBank/DDBJ databases">
        <title>Brucella canis ATCC 23365 whole genome shotgun sequencing project.</title>
        <authorList>
            <person name="Setubal J.C."/>
            <person name="Bowns C."/>
            <person name="Boyle S."/>
            <person name="Crasta O.R."/>
            <person name="Czar M.J."/>
            <person name="Dharmanolla C."/>
            <person name="Gillespie J.J."/>
            <person name="Kenyon R.W."/>
            <person name="Lu J."/>
            <person name="Mane S."/>
            <person name="Mohapatra S."/>
            <person name="Nagrani S."/>
            <person name="Purkayastha A."/>
            <person name="Rajasimha H.K."/>
            <person name="Shallom J.M."/>
            <person name="Shallom S."/>
            <person name="Shukla M."/>
            <person name="Snyder E.E."/>
            <person name="Sobral B.W."/>
            <person name="Wattam A.R."/>
            <person name="Will R."/>
            <person name="Williams K."/>
            <person name="Yoo H."/>
            <person name="Bruce D."/>
            <person name="Detter C."/>
            <person name="Munk C."/>
            <person name="Brettin T.S."/>
        </authorList>
    </citation>
    <scope>NUCLEOTIDE SEQUENCE [LARGE SCALE GENOMIC DNA]</scope>
    <source>
        <strain>ATCC 23365 / NCTC 10854 / RM-666</strain>
    </source>
</reference>
<accession>A9M9H9</accession>
<comment type="function">
    <text evidence="1">Repressor involved in the biosynthesis of the osmoprotectant glycine betaine. It represses transcription of the choline transporter BetT and the genes of BetAB involved in the synthesis of glycine betaine (By similarity).</text>
</comment>
<comment type="pathway">
    <text>Amine and polyamine biosynthesis; betaine biosynthesis via choline pathway [regulation].</text>
</comment>